<reference key="1">
    <citation type="journal article" date="2004" name="Proc. Natl. Acad. Sci. U.S.A.">
        <title>Insights into the evolution of Yersinia pestis through whole-genome comparison with Yersinia pseudotuberculosis.</title>
        <authorList>
            <person name="Chain P.S.G."/>
            <person name="Carniel E."/>
            <person name="Larimer F.W."/>
            <person name="Lamerdin J."/>
            <person name="Stoutland P.O."/>
            <person name="Regala W.M."/>
            <person name="Georgescu A.M."/>
            <person name="Vergez L.M."/>
            <person name="Land M.L."/>
            <person name="Motin V.L."/>
            <person name="Brubaker R.R."/>
            <person name="Fowler J."/>
            <person name="Hinnebusch J."/>
            <person name="Marceau M."/>
            <person name="Medigue C."/>
            <person name="Simonet M."/>
            <person name="Chenal-Francisque V."/>
            <person name="Souza B."/>
            <person name="Dacheux D."/>
            <person name="Elliott J.M."/>
            <person name="Derbise A."/>
            <person name="Hauser L.J."/>
            <person name="Garcia E."/>
        </authorList>
    </citation>
    <scope>NUCLEOTIDE SEQUENCE [LARGE SCALE GENOMIC DNA]</scope>
    <source>
        <strain>IP32953</strain>
    </source>
</reference>
<keyword id="KW-0997">Cell inner membrane</keyword>
<keyword id="KW-1003">Cell membrane</keyword>
<keyword id="KW-0406">Ion transport</keyword>
<keyword id="KW-0472">Membrane</keyword>
<keyword id="KW-0520">NAD</keyword>
<keyword id="KW-0915">Sodium</keyword>
<keyword id="KW-0739">Sodium transport</keyword>
<keyword id="KW-1278">Translocase</keyword>
<keyword id="KW-0812">Transmembrane</keyword>
<keyword id="KW-1133">Transmembrane helix</keyword>
<keyword id="KW-0813">Transport</keyword>
<keyword id="KW-0830">Ubiquinone</keyword>
<evidence type="ECO:0000255" key="1">
    <source>
        <dbReference type="HAMAP-Rule" id="MF_00428"/>
    </source>
</evidence>
<gene>
    <name evidence="1" type="primary">nqrD</name>
    <name type="ordered locus">YPTB0890</name>
</gene>
<sequence length="209" mass="22643">MADSKEIKRVLLSPLFDNNPIALQILGVCSALAVTTKLETALVMTLAVTLVTAFSSFFISLIRNHIPNSVRIIVQMVIIASLVIVVDQVLRAYAYEISKQLSVFVGLIITNCIVMGRAEAYAMKSPPIESFMDGIGNGLGYGVILVLVGFVRELVGSGKLFGVTVLETVQNGGWYLPNGLFLLAPSAFFIIGLLIWGLRTLKPAQIEKE</sequence>
<dbReference type="EC" id="7.2.1.1" evidence="1"/>
<dbReference type="EMBL" id="BX936398">
    <property type="protein sequence ID" value="CAH20130.1"/>
    <property type="molecule type" value="Genomic_DNA"/>
</dbReference>
<dbReference type="RefSeq" id="WP_002208714.1">
    <property type="nucleotide sequence ID" value="NZ_CP009712.1"/>
</dbReference>
<dbReference type="SMR" id="Q66E03"/>
<dbReference type="KEGG" id="ypo:BZ17_1656"/>
<dbReference type="KEGG" id="yps:YPTB0890"/>
<dbReference type="PATRIC" id="fig|273123.14.peg.1761"/>
<dbReference type="Proteomes" id="UP000001011">
    <property type="component" value="Chromosome"/>
</dbReference>
<dbReference type="GO" id="GO:0005886">
    <property type="term" value="C:plasma membrane"/>
    <property type="evidence" value="ECO:0007669"/>
    <property type="project" value="UniProtKB-SubCell"/>
</dbReference>
<dbReference type="GO" id="GO:0016655">
    <property type="term" value="F:oxidoreductase activity, acting on NAD(P)H, quinone or similar compound as acceptor"/>
    <property type="evidence" value="ECO:0007669"/>
    <property type="project" value="UniProtKB-UniRule"/>
</dbReference>
<dbReference type="GO" id="GO:0006814">
    <property type="term" value="P:sodium ion transport"/>
    <property type="evidence" value="ECO:0007669"/>
    <property type="project" value="UniProtKB-UniRule"/>
</dbReference>
<dbReference type="HAMAP" id="MF_00428">
    <property type="entry name" value="NqrD"/>
    <property type="match status" value="1"/>
</dbReference>
<dbReference type="InterPro" id="IPR011292">
    <property type="entry name" value="NqrD"/>
</dbReference>
<dbReference type="InterPro" id="IPR003667">
    <property type="entry name" value="NqrDE/RnfAE"/>
</dbReference>
<dbReference type="NCBIfam" id="TIGR01939">
    <property type="entry name" value="nqrD"/>
    <property type="match status" value="1"/>
</dbReference>
<dbReference type="NCBIfam" id="NF006777">
    <property type="entry name" value="PRK09292.1"/>
    <property type="match status" value="1"/>
</dbReference>
<dbReference type="NCBIfam" id="NF009070">
    <property type="entry name" value="PRK12405.1"/>
    <property type="match status" value="1"/>
</dbReference>
<dbReference type="PANTHER" id="PTHR30586">
    <property type="entry name" value="ELECTRON TRANSPORT COMPLEX PROTEIN RNFE"/>
    <property type="match status" value="1"/>
</dbReference>
<dbReference type="PANTHER" id="PTHR30586:SF1">
    <property type="entry name" value="NA(+)-TRANSLOCATING NADH-QUINONE REDUCTASE SUBUNIT D"/>
    <property type="match status" value="1"/>
</dbReference>
<dbReference type="Pfam" id="PF02508">
    <property type="entry name" value="Rnf-Nqr"/>
    <property type="match status" value="1"/>
</dbReference>
<dbReference type="PIRSF" id="PIRSF006102">
    <property type="entry name" value="NQR_DE"/>
    <property type="match status" value="1"/>
</dbReference>
<protein>
    <recommendedName>
        <fullName evidence="1">Na(+)-translocating NADH-quinone reductase subunit D</fullName>
        <shortName evidence="1">Na(+)-NQR subunit D</shortName>
        <shortName evidence="1">Na(+)-translocating NQR subunit D</shortName>
        <ecNumber evidence="1">7.2.1.1</ecNumber>
    </recommendedName>
    <alternativeName>
        <fullName evidence="1">NQR complex subunit D</fullName>
    </alternativeName>
    <alternativeName>
        <fullName evidence="1">NQR-1 subunit D</fullName>
    </alternativeName>
</protein>
<feature type="chain" id="PRO_1000060182" description="Na(+)-translocating NADH-quinone reductase subunit D">
    <location>
        <begin position="1"/>
        <end position="209"/>
    </location>
</feature>
<feature type="transmembrane region" description="Helical" evidence="1">
    <location>
        <begin position="42"/>
        <end position="62"/>
    </location>
</feature>
<feature type="transmembrane region" description="Helical" evidence="1">
    <location>
        <begin position="66"/>
        <end position="86"/>
    </location>
</feature>
<feature type="transmembrane region" description="Helical" evidence="1">
    <location>
        <begin position="103"/>
        <end position="123"/>
    </location>
</feature>
<feature type="transmembrane region" description="Helical" evidence="1">
    <location>
        <begin position="131"/>
        <end position="151"/>
    </location>
</feature>
<feature type="transmembrane region" description="Helical" evidence="1">
    <location>
        <begin position="178"/>
        <end position="198"/>
    </location>
</feature>
<organism>
    <name type="scientific">Yersinia pseudotuberculosis serotype I (strain IP32953)</name>
    <dbReference type="NCBI Taxonomy" id="273123"/>
    <lineage>
        <taxon>Bacteria</taxon>
        <taxon>Pseudomonadati</taxon>
        <taxon>Pseudomonadota</taxon>
        <taxon>Gammaproteobacteria</taxon>
        <taxon>Enterobacterales</taxon>
        <taxon>Yersiniaceae</taxon>
        <taxon>Yersinia</taxon>
    </lineage>
</organism>
<name>NQRD_YERPS</name>
<proteinExistence type="inferred from homology"/>
<comment type="function">
    <text evidence="1">NQR complex catalyzes the reduction of ubiquinone-1 to ubiquinol by two successive reactions, coupled with the transport of Na(+) ions from the cytoplasm to the periplasm. NqrA to NqrE are probably involved in the second step, the conversion of ubisemiquinone to ubiquinol.</text>
</comment>
<comment type="catalytic activity">
    <reaction evidence="1">
        <text>a ubiquinone + n Na(+)(in) + NADH + H(+) = a ubiquinol + n Na(+)(out) + NAD(+)</text>
        <dbReference type="Rhea" id="RHEA:47748"/>
        <dbReference type="Rhea" id="RHEA-COMP:9565"/>
        <dbReference type="Rhea" id="RHEA-COMP:9566"/>
        <dbReference type="ChEBI" id="CHEBI:15378"/>
        <dbReference type="ChEBI" id="CHEBI:16389"/>
        <dbReference type="ChEBI" id="CHEBI:17976"/>
        <dbReference type="ChEBI" id="CHEBI:29101"/>
        <dbReference type="ChEBI" id="CHEBI:57540"/>
        <dbReference type="ChEBI" id="CHEBI:57945"/>
        <dbReference type="EC" id="7.2.1.1"/>
    </reaction>
</comment>
<comment type="subunit">
    <text evidence="1">Composed of six subunits; NqrA, NqrB, NqrC, NqrD, NqrE and NqrF.</text>
</comment>
<comment type="subcellular location">
    <subcellularLocation>
        <location evidence="1">Cell inner membrane</location>
        <topology evidence="1">Multi-pass membrane protein</topology>
    </subcellularLocation>
</comment>
<comment type="similarity">
    <text evidence="1">Belongs to the NqrDE/RnfAE family.</text>
</comment>
<accession>Q66E03</accession>